<comment type="function">
    <text evidence="1">Catalyzes the attachment of tyrosine to tRNA(Tyr) in a two-step reaction: tyrosine is first activated by ATP to form Tyr-AMP and then transferred to the acceptor end of tRNA(Tyr).</text>
</comment>
<comment type="catalytic activity">
    <reaction evidence="1">
        <text>tRNA(Tyr) + L-tyrosine + ATP = L-tyrosyl-tRNA(Tyr) + AMP + diphosphate + H(+)</text>
        <dbReference type="Rhea" id="RHEA:10220"/>
        <dbReference type="Rhea" id="RHEA-COMP:9706"/>
        <dbReference type="Rhea" id="RHEA-COMP:9707"/>
        <dbReference type="ChEBI" id="CHEBI:15378"/>
        <dbReference type="ChEBI" id="CHEBI:30616"/>
        <dbReference type="ChEBI" id="CHEBI:33019"/>
        <dbReference type="ChEBI" id="CHEBI:58315"/>
        <dbReference type="ChEBI" id="CHEBI:78442"/>
        <dbReference type="ChEBI" id="CHEBI:78536"/>
        <dbReference type="ChEBI" id="CHEBI:456215"/>
        <dbReference type="EC" id="6.1.1.1"/>
    </reaction>
</comment>
<comment type="subunit">
    <text evidence="1">Homodimer.</text>
</comment>
<comment type="subcellular location">
    <subcellularLocation>
        <location evidence="1">Cytoplasm</location>
    </subcellularLocation>
</comment>
<comment type="similarity">
    <text evidence="1">Belongs to the class-I aminoacyl-tRNA synthetase family. TyrS type 1 subfamily.</text>
</comment>
<comment type="sequence caution" evidence="2">
    <conflict type="erroneous initiation">
        <sequence resource="EMBL-CDS" id="AAV63384"/>
    </conflict>
</comment>
<proteinExistence type="inferred from homology"/>
<organism>
    <name type="scientific">Streptococcus thermophilus (strain CNRZ 1066)</name>
    <dbReference type="NCBI Taxonomy" id="299768"/>
    <lineage>
        <taxon>Bacteria</taxon>
        <taxon>Bacillati</taxon>
        <taxon>Bacillota</taxon>
        <taxon>Bacilli</taxon>
        <taxon>Lactobacillales</taxon>
        <taxon>Streptococcaceae</taxon>
        <taxon>Streptococcus</taxon>
    </lineage>
</organism>
<name>SYY1_STRT1</name>
<accession>Q5LXV1</accession>
<reference key="1">
    <citation type="journal article" date="2004" name="Nat. Biotechnol.">
        <title>Complete sequence and comparative genome analysis of the dairy bacterium Streptococcus thermophilus.</title>
        <authorList>
            <person name="Bolotin A."/>
            <person name="Quinquis B."/>
            <person name="Renault P."/>
            <person name="Sorokin A."/>
            <person name="Ehrlich S.D."/>
            <person name="Kulakauskas S."/>
            <person name="Lapidus A."/>
            <person name="Goltsman E."/>
            <person name="Mazur M."/>
            <person name="Pusch G.D."/>
            <person name="Fonstein M."/>
            <person name="Overbeek R."/>
            <person name="Kyprides N."/>
            <person name="Purnelle B."/>
            <person name="Prozzi D."/>
            <person name="Ngui K."/>
            <person name="Masuy D."/>
            <person name="Hancy F."/>
            <person name="Burteau S."/>
            <person name="Boutry M."/>
            <person name="Delcour J."/>
            <person name="Goffeau A."/>
            <person name="Hols P."/>
        </authorList>
    </citation>
    <scope>NUCLEOTIDE SEQUENCE [LARGE SCALE GENOMIC DNA]</scope>
    <source>
        <strain>CNRZ 1066</strain>
    </source>
</reference>
<evidence type="ECO:0000255" key="1">
    <source>
        <dbReference type="HAMAP-Rule" id="MF_02006"/>
    </source>
</evidence>
<evidence type="ECO:0000305" key="2"/>
<dbReference type="EC" id="6.1.1.1" evidence="1"/>
<dbReference type="EMBL" id="CP000024">
    <property type="protein sequence ID" value="AAV63384.1"/>
    <property type="status" value="ALT_INIT"/>
    <property type="molecule type" value="Genomic_DNA"/>
</dbReference>
<dbReference type="SMR" id="Q5LXV1"/>
<dbReference type="KEGG" id="stc:str1870"/>
<dbReference type="HOGENOM" id="CLU_024003_0_3_9"/>
<dbReference type="GO" id="GO:0005829">
    <property type="term" value="C:cytosol"/>
    <property type="evidence" value="ECO:0007669"/>
    <property type="project" value="TreeGrafter"/>
</dbReference>
<dbReference type="GO" id="GO:0005524">
    <property type="term" value="F:ATP binding"/>
    <property type="evidence" value="ECO:0007669"/>
    <property type="project" value="UniProtKB-UniRule"/>
</dbReference>
<dbReference type="GO" id="GO:0003723">
    <property type="term" value="F:RNA binding"/>
    <property type="evidence" value="ECO:0007669"/>
    <property type="project" value="UniProtKB-KW"/>
</dbReference>
<dbReference type="GO" id="GO:0004831">
    <property type="term" value="F:tyrosine-tRNA ligase activity"/>
    <property type="evidence" value="ECO:0007669"/>
    <property type="project" value="UniProtKB-UniRule"/>
</dbReference>
<dbReference type="GO" id="GO:0006437">
    <property type="term" value="P:tyrosyl-tRNA aminoacylation"/>
    <property type="evidence" value="ECO:0007669"/>
    <property type="project" value="UniProtKB-UniRule"/>
</dbReference>
<dbReference type="CDD" id="cd00165">
    <property type="entry name" value="S4"/>
    <property type="match status" value="1"/>
</dbReference>
<dbReference type="CDD" id="cd00805">
    <property type="entry name" value="TyrRS_core"/>
    <property type="match status" value="1"/>
</dbReference>
<dbReference type="FunFam" id="1.10.240.10:FF:000001">
    <property type="entry name" value="Tyrosine--tRNA ligase"/>
    <property type="match status" value="1"/>
</dbReference>
<dbReference type="FunFam" id="3.40.50.620:FF:000008">
    <property type="entry name" value="Tyrosine--tRNA ligase"/>
    <property type="match status" value="1"/>
</dbReference>
<dbReference type="Gene3D" id="3.40.50.620">
    <property type="entry name" value="HUPs"/>
    <property type="match status" value="1"/>
</dbReference>
<dbReference type="Gene3D" id="3.10.290.10">
    <property type="entry name" value="RNA-binding S4 domain"/>
    <property type="match status" value="1"/>
</dbReference>
<dbReference type="Gene3D" id="1.10.240.10">
    <property type="entry name" value="Tyrosyl-Transfer RNA Synthetase"/>
    <property type="match status" value="1"/>
</dbReference>
<dbReference type="HAMAP" id="MF_02006">
    <property type="entry name" value="Tyr_tRNA_synth_type1"/>
    <property type="match status" value="1"/>
</dbReference>
<dbReference type="InterPro" id="IPR001412">
    <property type="entry name" value="aa-tRNA-synth_I_CS"/>
</dbReference>
<dbReference type="InterPro" id="IPR002305">
    <property type="entry name" value="aa-tRNA-synth_Ic"/>
</dbReference>
<dbReference type="InterPro" id="IPR014729">
    <property type="entry name" value="Rossmann-like_a/b/a_fold"/>
</dbReference>
<dbReference type="InterPro" id="IPR002942">
    <property type="entry name" value="S4_RNA-bd"/>
</dbReference>
<dbReference type="InterPro" id="IPR036986">
    <property type="entry name" value="S4_RNA-bd_sf"/>
</dbReference>
<dbReference type="InterPro" id="IPR054608">
    <property type="entry name" value="SYY-like_C"/>
</dbReference>
<dbReference type="InterPro" id="IPR002307">
    <property type="entry name" value="Tyr-tRNA-ligase"/>
</dbReference>
<dbReference type="InterPro" id="IPR024088">
    <property type="entry name" value="Tyr-tRNA-ligase_bac-type"/>
</dbReference>
<dbReference type="InterPro" id="IPR024107">
    <property type="entry name" value="Tyr-tRNA-ligase_bac_1"/>
</dbReference>
<dbReference type="NCBIfam" id="TIGR00234">
    <property type="entry name" value="tyrS"/>
    <property type="match status" value="1"/>
</dbReference>
<dbReference type="PANTHER" id="PTHR11766:SF0">
    <property type="entry name" value="TYROSINE--TRNA LIGASE, MITOCHONDRIAL"/>
    <property type="match status" value="1"/>
</dbReference>
<dbReference type="PANTHER" id="PTHR11766">
    <property type="entry name" value="TYROSYL-TRNA SYNTHETASE"/>
    <property type="match status" value="1"/>
</dbReference>
<dbReference type="Pfam" id="PF22421">
    <property type="entry name" value="SYY_C-terminal"/>
    <property type="match status" value="1"/>
</dbReference>
<dbReference type="Pfam" id="PF00579">
    <property type="entry name" value="tRNA-synt_1b"/>
    <property type="match status" value="1"/>
</dbReference>
<dbReference type="PRINTS" id="PR01040">
    <property type="entry name" value="TRNASYNTHTYR"/>
</dbReference>
<dbReference type="SMART" id="SM00363">
    <property type="entry name" value="S4"/>
    <property type="match status" value="1"/>
</dbReference>
<dbReference type="SUPFAM" id="SSF55174">
    <property type="entry name" value="Alpha-L RNA-binding motif"/>
    <property type="match status" value="1"/>
</dbReference>
<dbReference type="SUPFAM" id="SSF52374">
    <property type="entry name" value="Nucleotidylyl transferase"/>
    <property type="match status" value="1"/>
</dbReference>
<dbReference type="PROSITE" id="PS00178">
    <property type="entry name" value="AA_TRNA_LIGASE_I"/>
    <property type="match status" value="1"/>
</dbReference>
<dbReference type="PROSITE" id="PS50889">
    <property type="entry name" value="S4"/>
    <property type="match status" value="1"/>
</dbReference>
<gene>
    <name evidence="1" type="primary">tyrS1</name>
    <name type="ordered locus">str1870</name>
</gene>
<sequence length="418" mass="47225">MTIFEELKARGLIFQTTDEEALVKAFEEGPVSFYTGYDPTADSLHLGHLVAILTSRRLQLAGHKPYALVGGATGLIGDPSFKDAERSLQTKETVEGWVEKIQGQLSRFLDFENGDNKAVMVNNYDWFGSVSFIDFLRDVGKYFTVNYMMSKESVKKRIETGISYTEFAYQIMQGYDFYELNAKYGVTLQIGGSDQWGNMTAGTELLRRKADKSGHVITVPLITDSTGKKFGKSEGNAVWLDATKTTPYEMYQFWLNVMDDDAVRFLKIFTFLSLEEIEEIGKEFDQARHQRLAQKVLAREVVTLVHGKEAYEQAVHITEQLFAGNLKALSARDLKVALNGVPTYEISADENLNIVELLVNAKISPSKRQAREDVQNGAIYINGERVQDLDYTLSDTDKIDNEITVIRRGKKKNFVLTY</sequence>
<protein>
    <recommendedName>
        <fullName evidence="1">Tyrosine--tRNA ligase 1</fullName>
        <ecNumber evidence="1">6.1.1.1</ecNumber>
    </recommendedName>
    <alternativeName>
        <fullName evidence="1">Tyrosyl-tRNA synthetase 1</fullName>
        <shortName evidence="1">TyrRS 1</shortName>
    </alternativeName>
</protein>
<feature type="chain" id="PRO_0000234797" description="Tyrosine--tRNA ligase 1">
    <location>
        <begin position="1"/>
        <end position="418"/>
    </location>
</feature>
<feature type="domain" description="S4 RNA-binding" evidence="1">
    <location>
        <begin position="352"/>
        <end position="418"/>
    </location>
</feature>
<feature type="short sequence motif" description="'HIGH' region">
    <location>
        <begin position="39"/>
        <end position="48"/>
    </location>
</feature>
<feature type="short sequence motif" description="'KMSKS' region">
    <location>
        <begin position="229"/>
        <end position="233"/>
    </location>
</feature>
<feature type="binding site" evidence="1">
    <location>
        <position position="34"/>
    </location>
    <ligand>
        <name>L-tyrosine</name>
        <dbReference type="ChEBI" id="CHEBI:58315"/>
    </ligand>
</feature>
<feature type="binding site" evidence="1">
    <location>
        <position position="169"/>
    </location>
    <ligand>
        <name>L-tyrosine</name>
        <dbReference type="ChEBI" id="CHEBI:58315"/>
    </ligand>
</feature>
<feature type="binding site" evidence="1">
    <location>
        <position position="173"/>
    </location>
    <ligand>
        <name>L-tyrosine</name>
        <dbReference type="ChEBI" id="CHEBI:58315"/>
    </ligand>
</feature>
<feature type="binding site" evidence="1">
    <location>
        <position position="232"/>
    </location>
    <ligand>
        <name>ATP</name>
        <dbReference type="ChEBI" id="CHEBI:30616"/>
    </ligand>
</feature>
<keyword id="KW-0030">Aminoacyl-tRNA synthetase</keyword>
<keyword id="KW-0067">ATP-binding</keyword>
<keyword id="KW-0963">Cytoplasm</keyword>
<keyword id="KW-0436">Ligase</keyword>
<keyword id="KW-0547">Nucleotide-binding</keyword>
<keyword id="KW-0648">Protein biosynthesis</keyword>
<keyword id="KW-0694">RNA-binding</keyword>